<accession>Q9X7F4</accession>
<accession>B7L3L2</accession>
<organism>
    <name type="scientific">Methylorubrum extorquens (strain CM4 / NCIMB 13688)</name>
    <name type="common">Methylobacterium extorquens</name>
    <dbReference type="NCBI Taxonomy" id="440085"/>
    <lineage>
        <taxon>Bacteria</taxon>
        <taxon>Pseudomonadati</taxon>
        <taxon>Pseudomonadota</taxon>
        <taxon>Alphaproteobacteria</taxon>
        <taxon>Hyphomicrobiales</taxon>
        <taxon>Methylobacteriaceae</taxon>
        <taxon>Methylorubrum</taxon>
    </lineage>
</organism>
<sequence length="342" mass="34913">MGEIGGNALDGIHARVRTAPLADQAAIAAVRQRDRLLTKPPGSLGRLEAIVEWLAAWQGKSPPVLESAAAVVFAGNHGVAKHGVSAYPAEVTAQMVANFEAGGAAINQIAKANGLKLSIVPIDLDRPTADIIIADAMSVQECAAAVNLGASVAAADLDLLCIGEMGIGNTTPASAILQALFGGPAHIWVGPGTGVERDALTNKIRAVESAVARVIGTDGTSPLEFLRRLGGREIAALVGAIIEARHRRIPVLIDGFVATAAAAVVHAIEPGAIDHCLIGHLSAEPAHRRAVQALGKTPILELNMRLGEASGAALAAGIVRSALAVHTGMATFAEAGVTDRQT</sequence>
<feature type="chain" id="PRO_0000167054" description="Nicotinate-nucleotide--dimethylbenzimidazole phosphoribosyltransferase">
    <location>
        <begin position="1"/>
        <end position="342"/>
    </location>
</feature>
<feature type="active site" description="Proton acceptor" evidence="1">
    <location>
        <position position="308"/>
    </location>
</feature>
<reference key="1">
    <citation type="journal article" date="1999" name="Proc. Natl. Acad. Sci. U.S.A.">
        <title>A corrinoid-dependent catabolic pathway for growth of a Methylobacterium strain with chloromethane.</title>
        <authorList>
            <person name="Vannelli T."/>
            <person name="Messmer M."/>
            <person name="Studer A."/>
            <person name="Vuilleumier S."/>
            <person name="Leisinger T."/>
        </authorList>
    </citation>
    <scope>NUCLEOTIDE SEQUENCE [GENOMIC DNA]</scope>
</reference>
<reference key="2">
    <citation type="submission" date="2008-12" db="EMBL/GenBank/DDBJ databases">
        <title>Complete sequence of plasmid1 of Methylobacterium chloromethanicum CM4.</title>
        <authorList>
            <consortium name="US DOE Joint Genome Institute"/>
            <person name="Lucas S."/>
            <person name="Copeland A."/>
            <person name="Lapidus A."/>
            <person name="Glavina del Rio T."/>
            <person name="Dalin E."/>
            <person name="Tice H."/>
            <person name="Bruce D."/>
            <person name="Goodwin L."/>
            <person name="Pitluck S."/>
            <person name="Chertkov O."/>
            <person name="Brettin T."/>
            <person name="Detter J.C."/>
            <person name="Han C."/>
            <person name="Larimer F."/>
            <person name="Land M."/>
            <person name="Hauser L."/>
            <person name="Kyrpides N."/>
            <person name="Mikhailova N."/>
            <person name="Marx C."/>
            <person name="Richardson P."/>
        </authorList>
    </citation>
    <scope>NUCLEOTIDE SEQUENCE [LARGE SCALE GENOMIC DNA]</scope>
    <source>
        <strain>CM4 / NCIMB 13688</strain>
    </source>
</reference>
<proteinExistence type="inferred from homology"/>
<gene>
    <name type="primary">cobT</name>
    <name type="synonym">cobU</name>
    <name type="ordered locus">Mchl_5702</name>
</gene>
<comment type="function">
    <text evidence="1">Catalyzes the synthesis of alpha-ribazole-5'-phosphate from nicotinate mononucleotide (NAMN) and 5,6-dimethylbenzimidazole (DMB).</text>
</comment>
<comment type="catalytic activity">
    <reaction>
        <text>5,6-dimethylbenzimidazole + nicotinate beta-D-ribonucleotide = alpha-ribazole 5'-phosphate + nicotinate + H(+)</text>
        <dbReference type="Rhea" id="RHEA:11196"/>
        <dbReference type="ChEBI" id="CHEBI:15378"/>
        <dbReference type="ChEBI" id="CHEBI:15890"/>
        <dbReference type="ChEBI" id="CHEBI:32544"/>
        <dbReference type="ChEBI" id="CHEBI:57502"/>
        <dbReference type="ChEBI" id="CHEBI:57918"/>
        <dbReference type="EC" id="2.4.2.21"/>
    </reaction>
</comment>
<comment type="pathway">
    <text>Nucleoside biosynthesis; alpha-ribazole biosynthesis; alpha-ribazole from 5,6-dimethylbenzimidazole: step 1/2.</text>
</comment>
<comment type="similarity">
    <text evidence="2">Belongs to the CobT family.</text>
</comment>
<keyword id="KW-0169">Cobalamin biosynthesis</keyword>
<keyword id="KW-0328">Glycosyltransferase</keyword>
<keyword id="KW-0614">Plasmid</keyword>
<keyword id="KW-0808">Transferase</keyword>
<protein>
    <recommendedName>
        <fullName>Nicotinate-nucleotide--dimethylbenzimidazole phosphoribosyltransferase</fullName>
        <shortName>NN:DBI PRT</shortName>
        <ecNumber>2.4.2.21</ecNumber>
    </recommendedName>
    <alternativeName>
        <fullName>N(1)-alpha-phosphoribosyltransferase</fullName>
    </alternativeName>
</protein>
<dbReference type="EC" id="2.4.2.21"/>
<dbReference type="EMBL" id="AJ011316">
    <property type="protein sequence ID" value="CAB39398.1"/>
    <property type="molecule type" value="Genomic_DNA"/>
</dbReference>
<dbReference type="EMBL" id="CP001299">
    <property type="protein sequence ID" value="ACK86420.1"/>
    <property type="molecule type" value="Genomic_DNA"/>
</dbReference>
<dbReference type="PIR" id="T51703">
    <property type="entry name" value="T51703"/>
</dbReference>
<dbReference type="RefSeq" id="WP_012606310.1">
    <property type="nucleotide sequence ID" value="NC_011758.1"/>
</dbReference>
<dbReference type="SMR" id="Q9X7F4"/>
<dbReference type="KEGG" id="mch:Mchl_5702"/>
<dbReference type="HOGENOM" id="CLU_002982_0_1_5"/>
<dbReference type="UniPathway" id="UPA00061">
    <property type="reaction ID" value="UER00516"/>
</dbReference>
<dbReference type="Proteomes" id="UP000002385">
    <property type="component" value="Plasmid pCMU01"/>
</dbReference>
<dbReference type="GO" id="GO:0008939">
    <property type="term" value="F:nicotinate-nucleotide-dimethylbenzimidazole phosphoribosyltransferase activity"/>
    <property type="evidence" value="ECO:0007669"/>
    <property type="project" value="UniProtKB-UniRule"/>
</dbReference>
<dbReference type="GO" id="GO:0009236">
    <property type="term" value="P:cobalamin biosynthetic process"/>
    <property type="evidence" value="ECO:0007669"/>
    <property type="project" value="UniProtKB-KW"/>
</dbReference>
<dbReference type="CDD" id="cd02439">
    <property type="entry name" value="DMB-PRT_CobT"/>
    <property type="match status" value="1"/>
</dbReference>
<dbReference type="Gene3D" id="1.10.1610.10">
    <property type="match status" value="1"/>
</dbReference>
<dbReference type="Gene3D" id="3.40.50.10210">
    <property type="match status" value="1"/>
</dbReference>
<dbReference type="HAMAP" id="MF_00230">
    <property type="entry name" value="CobT"/>
    <property type="match status" value="1"/>
</dbReference>
<dbReference type="InterPro" id="IPR003200">
    <property type="entry name" value="Nict_dMeBzImd_PRibTrfase"/>
</dbReference>
<dbReference type="InterPro" id="IPR017846">
    <property type="entry name" value="Nict_dMeBzImd_PRibTrfase_bact"/>
</dbReference>
<dbReference type="InterPro" id="IPR023195">
    <property type="entry name" value="Nict_dMeBzImd_PRibTrfase_N"/>
</dbReference>
<dbReference type="InterPro" id="IPR036087">
    <property type="entry name" value="Nict_dMeBzImd_PRibTrfase_sf"/>
</dbReference>
<dbReference type="NCBIfam" id="TIGR03160">
    <property type="entry name" value="cobT_DBIPRT"/>
    <property type="match status" value="1"/>
</dbReference>
<dbReference type="NCBIfam" id="NF000996">
    <property type="entry name" value="PRK00105.1"/>
    <property type="match status" value="1"/>
</dbReference>
<dbReference type="PANTHER" id="PTHR43463">
    <property type="entry name" value="NICOTINATE-NUCLEOTIDE--DIMETHYLBENZIMIDAZOLE PHOSPHORIBOSYLTRANSFERASE"/>
    <property type="match status" value="1"/>
</dbReference>
<dbReference type="PANTHER" id="PTHR43463:SF1">
    <property type="entry name" value="NICOTINATE-NUCLEOTIDE--DIMETHYLBENZIMIDAZOLE PHOSPHORIBOSYLTRANSFERASE"/>
    <property type="match status" value="1"/>
</dbReference>
<dbReference type="Pfam" id="PF02277">
    <property type="entry name" value="DBI_PRT"/>
    <property type="match status" value="1"/>
</dbReference>
<dbReference type="SUPFAM" id="SSF52733">
    <property type="entry name" value="Nicotinate mononucleotide:5,6-dimethylbenzimidazole phosphoribosyltransferase (CobT)"/>
    <property type="match status" value="1"/>
</dbReference>
<name>COBT_METC4</name>
<geneLocation type="plasmid">
    <name>pMCHL01</name>
</geneLocation>
<evidence type="ECO:0000250" key="1"/>
<evidence type="ECO:0000305" key="2"/>